<protein>
    <recommendedName>
        <fullName>MICOS complex subunit MIC60</fullName>
    </recommendedName>
    <alternativeName>
        <fullName>Mitofilin</fullName>
    </alternativeName>
</protein>
<sequence>MLRTIGTKASGITFRGVRFQSTNPTVKKSKPLRKFLFRLGLLTGVFYAGGVAVSLKNDIVQDAFIEHVPLGEALLDFTEYYVNHPEELSFSSTKQKLQNFDKTVLIPKRGVQSAKVEDVEHIKNVTRGSADESVSLSKTIYSNLNLPSIDLEFKDEVLQSSVEHLNHLIDTIRTQVNTVDLLPQVEQLKSSIKELGSKYNSFVTDRNTAVEEALAKLDDELKTKYQNKELALTDKYISDLQETKRQIELKHDQILAKELDTAQRRILLEAENIIVQARINTLSEFESIISDKIDNERNGKLKNLDALAKRVEELENVQIKLFDNISNAEKLTNLKKTVSKINRLLISSNDGVDAKTLINEVNKFKTYSKDLNNELISSVLLNLPNDKALSNGVLSQAQLLARWDLLTPELRSASLLPPNAGILGHLSSKLFSFFLLGKSGTPTSGNDIESVISRVHDNLLKNRLDDALEEVSSLKGWSRKLSEDWIVEARKKLELQVLVGVLENEVSLL</sequence>
<reference key="1">
    <citation type="journal article" date="2009" name="Nat. Biotechnol.">
        <title>Genome sequence of the recombinant protein production host Pichia pastoris.</title>
        <authorList>
            <person name="De Schutter K."/>
            <person name="Lin Y.-C."/>
            <person name="Tiels P."/>
            <person name="Van Hecke A."/>
            <person name="Glinka S."/>
            <person name="Weber-Lehmann J."/>
            <person name="Rouze P."/>
            <person name="Van de Peer Y."/>
            <person name="Callewaert N."/>
        </authorList>
    </citation>
    <scope>NUCLEOTIDE SEQUENCE [LARGE SCALE GENOMIC DNA]</scope>
    <source>
        <strain>GS115 / ATCC 20864</strain>
    </source>
</reference>
<name>MIC60_KOMPG</name>
<comment type="function">
    <text evidence="1">Component of the MICOS complex, a large protein complex of the mitochondrial inner membrane that plays crucial roles in the maintenance of crista junctions, inner membrane architecture, and formation of contact sites to the outer membrane. Plays a role in keeping cristae membranes connected to the inner boundary membrane. Also promotes protein import via the mitochondrial intermembrane space assembly (MIA) pathway (By similarity).</text>
</comment>
<comment type="subunit">
    <text evidence="1">Component of the mitochondrial contact site and cristae organizing system (MICOS) complex.</text>
</comment>
<comment type="subcellular location">
    <subcellularLocation>
        <location evidence="1">Mitochondrion inner membrane</location>
        <topology evidence="1">Single-pass membrane protein</topology>
    </subcellularLocation>
</comment>
<comment type="similarity">
    <text evidence="3">Belongs to the MICOS complex subunit Mic60 family.</text>
</comment>
<feature type="transit peptide" description="Mitochondrion" evidence="2">
    <location>
        <begin position="1"/>
        <end position="19"/>
    </location>
</feature>
<feature type="chain" id="PRO_0000406670" description="MICOS complex subunit MIC60">
    <location>
        <begin position="20"/>
        <end position="509"/>
    </location>
</feature>
<feature type="topological domain" description="Mitochondrial matrix" evidence="2">
    <location>
        <begin position="20"/>
        <end position="34"/>
    </location>
</feature>
<feature type="transmembrane region" description="Helical" evidence="2">
    <location>
        <begin position="35"/>
        <end position="54"/>
    </location>
</feature>
<feature type="topological domain" description="Mitochondrial intermembrane" evidence="2">
    <location>
        <begin position="55"/>
        <end position="509"/>
    </location>
</feature>
<feature type="coiled-coil region" evidence="2">
    <location>
        <begin position="202"/>
        <end position="257"/>
    </location>
</feature>
<feature type="coiled-coil region" evidence="2">
    <location>
        <begin position="293"/>
        <end position="330"/>
    </location>
</feature>
<evidence type="ECO:0000250" key="1"/>
<evidence type="ECO:0000255" key="2"/>
<evidence type="ECO:0000305" key="3"/>
<gene>
    <name type="primary">MIC60</name>
    <name type="ordered locus">PAS_chr1-4_0172</name>
</gene>
<dbReference type="EMBL" id="FN392319">
    <property type="protein sequence ID" value="CAY68005.1"/>
    <property type="molecule type" value="Genomic_DNA"/>
</dbReference>
<dbReference type="RefSeq" id="XP_002490286.1">
    <property type="nucleotide sequence ID" value="XM_002490241.1"/>
</dbReference>
<dbReference type="SMR" id="C4QXN2"/>
<dbReference type="FunCoup" id="C4QXN2">
    <property type="interactions" value="199"/>
</dbReference>
<dbReference type="STRING" id="644223.C4QXN2"/>
<dbReference type="EnsemblFungi" id="CAY68005">
    <property type="protein sequence ID" value="CAY68005"/>
    <property type="gene ID" value="PAS_chr1-4_0172"/>
</dbReference>
<dbReference type="GeneID" id="8197156"/>
<dbReference type="KEGG" id="ppa:PAS_chr1-4_0172"/>
<dbReference type="eggNOG" id="KOG1854">
    <property type="taxonomic scope" value="Eukaryota"/>
</dbReference>
<dbReference type="HOGENOM" id="CLU_008024_2_0_1"/>
<dbReference type="InParanoid" id="C4QXN2"/>
<dbReference type="OMA" id="RLDHQMQ"/>
<dbReference type="OrthoDB" id="10261039at2759"/>
<dbReference type="Proteomes" id="UP000000314">
    <property type="component" value="Chromosome 1"/>
</dbReference>
<dbReference type="GO" id="GO:0061617">
    <property type="term" value="C:MICOS complex"/>
    <property type="evidence" value="ECO:0007669"/>
    <property type="project" value="TreeGrafter"/>
</dbReference>
<dbReference type="GO" id="GO:0042407">
    <property type="term" value="P:cristae formation"/>
    <property type="evidence" value="ECO:0007669"/>
    <property type="project" value="TreeGrafter"/>
</dbReference>
<dbReference type="InterPro" id="IPR019133">
    <property type="entry name" value="MIC60"/>
</dbReference>
<dbReference type="PANTHER" id="PTHR15415:SF7">
    <property type="entry name" value="MICOS COMPLEX SUBUNIT MIC60"/>
    <property type="match status" value="1"/>
</dbReference>
<dbReference type="PANTHER" id="PTHR15415">
    <property type="entry name" value="MITOFILIN"/>
    <property type="match status" value="1"/>
</dbReference>
<dbReference type="Pfam" id="PF09731">
    <property type="entry name" value="Mitofilin"/>
    <property type="match status" value="1"/>
</dbReference>
<accession>C4QXN2</accession>
<keyword id="KW-0175">Coiled coil</keyword>
<keyword id="KW-0472">Membrane</keyword>
<keyword id="KW-0496">Mitochondrion</keyword>
<keyword id="KW-0999">Mitochondrion inner membrane</keyword>
<keyword id="KW-1185">Reference proteome</keyword>
<keyword id="KW-0809">Transit peptide</keyword>
<keyword id="KW-0812">Transmembrane</keyword>
<keyword id="KW-1133">Transmembrane helix</keyword>
<organism>
    <name type="scientific">Komagataella phaffii (strain GS115 / ATCC 20864)</name>
    <name type="common">Yeast</name>
    <name type="synonym">Pichia pastoris</name>
    <dbReference type="NCBI Taxonomy" id="644223"/>
    <lineage>
        <taxon>Eukaryota</taxon>
        <taxon>Fungi</taxon>
        <taxon>Dikarya</taxon>
        <taxon>Ascomycota</taxon>
        <taxon>Saccharomycotina</taxon>
        <taxon>Pichiomycetes</taxon>
        <taxon>Pichiales</taxon>
        <taxon>Pichiaceae</taxon>
        <taxon>Komagataella</taxon>
    </lineage>
</organism>
<proteinExistence type="inferred from homology"/>